<comment type="function">
    <text evidence="4">Hydrolyzes ceftazidime and cefotaxime.</text>
</comment>
<comment type="catalytic activity">
    <reaction evidence="3">
        <text>a beta-lactam + H2O = a substituted beta-amino acid</text>
        <dbReference type="Rhea" id="RHEA:20401"/>
        <dbReference type="ChEBI" id="CHEBI:15377"/>
        <dbReference type="ChEBI" id="CHEBI:35627"/>
        <dbReference type="ChEBI" id="CHEBI:140347"/>
        <dbReference type="EC" id="3.5.2.6"/>
    </reaction>
</comment>
<comment type="miscellaneous">
    <text evidence="5">The class A beta-lactamase family has a specific amino-acid numbering system, sometimes called Ambler or ABL numbering and often misspelt as Amber. A multiple sequence alignment was used to derive a consensus sequence and then the consensus was numbered taking into account insertions and deletions. This allows use of identical numbers, e.g. for active site residues, despite differences in protein length. UniProt always uses natural numbering of residues, hence there appear to be differences in numbering between this entry and some papers.</text>
</comment>
<comment type="similarity">
    <text evidence="4">Belongs to the class-A beta-lactamase family.</text>
</comment>
<proteinExistence type="inferred from homology"/>
<name>BLA34_ECOLX</name>
<protein>
    <recommendedName>
        <fullName>Beta-lactamase SHV-34</fullName>
        <ecNumber>3.5.2.6</ecNumber>
    </recommendedName>
</protein>
<accession>Q93LM8</accession>
<sequence length="286" mass="31147">MRYFRLCIISLLATLPLAVHASPQPLEQIKLSESQLSGSVGMIEMDLASGRTLTAWRADGRFPMMSTFKVVLCGAVLARVDAGDEQLERKIHYRQQDLVDYSPVSEKHLADGMTVGELCAAAITMSDNSAANLLLATVGGPAGLTAFLRQIGDNVTRLDRWETELNEALPGDARDTTTPASMAATLRKLLTSQRLSARSQRQLLQWMVDDRVAGPLIRSVLPAGWFIADKTGASERGARGIVALLGPNNKAERIVVIYLRDTPASMAERNQQIAGIGAALIEHWQR</sequence>
<dbReference type="EC" id="3.5.2.6"/>
<dbReference type="EMBL" id="AY036620">
    <property type="protein sequence ID" value="AAK64187.1"/>
    <property type="molecule type" value="Genomic_DNA"/>
</dbReference>
<dbReference type="RefSeq" id="WP_063864676.1">
    <property type="nucleotide sequence ID" value="NG_050073.1"/>
</dbReference>
<dbReference type="SMR" id="Q93LM8"/>
<dbReference type="CARD" id="ARO:3001092">
    <property type="molecule name" value="SHV-34"/>
    <property type="mechanism identifier" value="ARO:0001004"/>
    <property type="mechanism name" value="antibiotic inactivation"/>
</dbReference>
<dbReference type="KEGG" id="ag:AAK64187"/>
<dbReference type="GO" id="GO:0008800">
    <property type="term" value="F:beta-lactamase activity"/>
    <property type="evidence" value="ECO:0007669"/>
    <property type="project" value="UniProtKB-EC"/>
</dbReference>
<dbReference type="GO" id="GO:0030655">
    <property type="term" value="P:beta-lactam antibiotic catabolic process"/>
    <property type="evidence" value="ECO:0007669"/>
    <property type="project" value="InterPro"/>
</dbReference>
<dbReference type="GO" id="GO:0046677">
    <property type="term" value="P:response to antibiotic"/>
    <property type="evidence" value="ECO:0007669"/>
    <property type="project" value="UniProtKB-KW"/>
</dbReference>
<dbReference type="Gene3D" id="3.40.710.10">
    <property type="entry name" value="DD-peptidase/beta-lactamase superfamily"/>
    <property type="match status" value="1"/>
</dbReference>
<dbReference type="InterPro" id="IPR012338">
    <property type="entry name" value="Beta-lactam/transpept-like"/>
</dbReference>
<dbReference type="InterPro" id="IPR045155">
    <property type="entry name" value="Beta-lactam_cat"/>
</dbReference>
<dbReference type="InterPro" id="IPR000871">
    <property type="entry name" value="Beta-lactam_class-A"/>
</dbReference>
<dbReference type="InterPro" id="IPR023650">
    <property type="entry name" value="Beta-lactam_class-A_AS"/>
</dbReference>
<dbReference type="NCBIfam" id="NF033103">
    <property type="entry name" value="bla_class_A"/>
    <property type="match status" value="1"/>
</dbReference>
<dbReference type="NCBIfam" id="NF000285">
    <property type="entry name" value="SHV"/>
    <property type="match status" value="1"/>
</dbReference>
<dbReference type="NCBIfam" id="NF012143">
    <property type="entry name" value="SHV_LEN_OKP"/>
    <property type="match status" value="1"/>
</dbReference>
<dbReference type="PANTHER" id="PTHR35333">
    <property type="entry name" value="BETA-LACTAMASE"/>
    <property type="match status" value="1"/>
</dbReference>
<dbReference type="PANTHER" id="PTHR35333:SF3">
    <property type="entry name" value="BETA-LACTAMASE-TYPE TRANSPEPTIDASE FOLD CONTAINING PROTEIN"/>
    <property type="match status" value="1"/>
</dbReference>
<dbReference type="Pfam" id="PF13354">
    <property type="entry name" value="Beta-lactamase2"/>
    <property type="match status" value="1"/>
</dbReference>
<dbReference type="PRINTS" id="PR00118">
    <property type="entry name" value="BLACTAMASEA"/>
</dbReference>
<dbReference type="SUPFAM" id="SSF56601">
    <property type="entry name" value="beta-lactamase/transpeptidase-like"/>
    <property type="match status" value="1"/>
</dbReference>
<dbReference type="PROSITE" id="PS00146">
    <property type="entry name" value="BETA_LACTAMASE_A"/>
    <property type="match status" value="1"/>
</dbReference>
<evidence type="ECO:0000250" key="1"/>
<evidence type="ECO:0000255" key="2"/>
<evidence type="ECO:0000255" key="3">
    <source>
        <dbReference type="PROSITE-ProRule" id="PRU10101"/>
    </source>
</evidence>
<evidence type="ECO:0000305" key="4"/>
<evidence type="ECO:0000305" key="5">
    <source>
    </source>
</evidence>
<geneLocation type="plasmid">
    <name>pOZ185</name>
</geneLocation>
<reference key="1">
    <citation type="journal article" date="2003" name="J. Antimicrob. Chemother.">
        <title>SHV-34: an extended-spectrum beta-lactamase encoded by an epidemic plasmid.</title>
        <authorList>
            <person name="Heritage J."/>
            <person name="Chambers P.A."/>
            <person name="Tyndall C."/>
            <person name="Buescher E.S."/>
        </authorList>
    </citation>
    <scope>NUCLEOTIDE SEQUENCE [GENOMIC DNA]</scope>
    <scope>PROBABLE FUNCTION</scope>
</reference>
<reference key="2">
    <citation type="journal article" date="1991" name="Biochem. J.">
        <title>A standard numbering scheme for the class A beta-lactamases.</title>
        <authorList>
            <person name="Ambler R.P."/>
            <person name="Coulson A.F."/>
            <person name="Frere J.M."/>
            <person name="Ghuysen J.M."/>
            <person name="Joris B."/>
            <person name="Forsman M."/>
            <person name="Levesque R.C."/>
            <person name="Tiraby G."/>
            <person name="Waley S.G."/>
        </authorList>
    </citation>
    <scope>AMINO ACID NUMBERING SCHEME</scope>
</reference>
<feature type="signal peptide" evidence="2">
    <location>
        <begin position="1"/>
        <end position="21"/>
    </location>
</feature>
<feature type="chain" id="PRO_0000352523" description="Beta-lactamase SHV-34">
    <location>
        <begin position="22"/>
        <end position="286"/>
    </location>
</feature>
<feature type="active site" description="Acyl-ester intermediate" evidence="3">
    <location>
        <position position="66"/>
    </location>
</feature>
<feature type="active site" description="Proton acceptor" evidence="1">
    <location>
        <position position="164"/>
    </location>
</feature>
<feature type="binding site" evidence="1">
    <location>
        <begin position="230"/>
        <end position="232"/>
    </location>
    <ligand>
        <name>substrate</name>
    </ligand>
</feature>
<feature type="disulfide bond" evidence="1">
    <location>
        <begin position="73"/>
        <end position="119"/>
    </location>
</feature>
<gene>
    <name type="primary">bla</name>
    <name type="synonym">shv34</name>
</gene>
<organism>
    <name type="scientific">Escherichia coli</name>
    <dbReference type="NCBI Taxonomy" id="562"/>
    <lineage>
        <taxon>Bacteria</taxon>
        <taxon>Pseudomonadati</taxon>
        <taxon>Pseudomonadota</taxon>
        <taxon>Gammaproteobacteria</taxon>
        <taxon>Enterobacterales</taxon>
        <taxon>Enterobacteriaceae</taxon>
        <taxon>Escherichia</taxon>
    </lineage>
</organism>
<keyword id="KW-0046">Antibiotic resistance</keyword>
<keyword id="KW-1015">Disulfide bond</keyword>
<keyword id="KW-0378">Hydrolase</keyword>
<keyword id="KW-0614">Plasmid</keyword>
<keyword id="KW-0732">Signal</keyword>